<accession>B7HA46</accession>
<name>PPAC_BACC4</name>
<dbReference type="EC" id="3.6.1.1" evidence="1"/>
<dbReference type="EMBL" id="CP001176">
    <property type="protein sequence ID" value="ACK60043.1"/>
    <property type="molecule type" value="Genomic_DNA"/>
</dbReference>
<dbReference type="RefSeq" id="WP_000416873.1">
    <property type="nucleotide sequence ID" value="NZ_VEHB01000001.1"/>
</dbReference>
<dbReference type="SMR" id="B7HA46"/>
<dbReference type="KEGG" id="bcb:BCB4264_A2837"/>
<dbReference type="HOGENOM" id="CLU_025243_0_1_9"/>
<dbReference type="Proteomes" id="UP000007096">
    <property type="component" value="Chromosome"/>
</dbReference>
<dbReference type="GO" id="GO:0005737">
    <property type="term" value="C:cytoplasm"/>
    <property type="evidence" value="ECO:0007669"/>
    <property type="project" value="UniProtKB-SubCell"/>
</dbReference>
<dbReference type="GO" id="GO:0004427">
    <property type="term" value="F:inorganic diphosphate phosphatase activity"/>
    <property type="evidence" value="ECO:0007669"/>
    <property type="project" value="UniProtKB-UniRule"/>
</dbReference>
<dbReference type="GO" id="GO:0030145">
    <property type="term" value="F:manganese ion binding"/>
    <property type="evidence" value="ECO:0007669"/>
    <property type="project" value="UniProtKB-UniRule"/>
</dbReference>
<dbReference type="FunFam" id="3.10.310.20:FF:000001">
    <property type="entry name" value="Probable manganese-dependent inorganic pyrophosphatase"/>
    <property type="match status" value="1"/>
</dbReference>
<dbReference type="FunFam" id="3.90.1640.10:FF:000001">
    <property type="entry name" value="Probable manganese-dependent inorganic pyrophosphatase"/>
    <property type="match status" value="1"/>
</dbReference>
<dbReference type="Gene3D" id="3.10.310.20">
    <property type="entry name" value="DHHA2 domain"/>
    <property type="match status" value="1"/>
</dbReference>
<dbReference type="Gene3D" id="3.90.1640.10">
    <property type="entry name" value="inorganic pyrophosphatase (n-terminal core)"/>
    <property type="match status" value="1"/>
</dbReference>
<dbReference type="HAMAP" id="MF_00207">
    <property type="entry name" value="PPase_C"/>
    <property type="match status" value="1"/>
</dbReference>
<dbReference type="InterPro" id="IPR001667">
    <property type="entry name" value="DDH_dom"/>
</dbReference>
<dbReference type="InterPro" id="IPR038763">
    <property type="entry name" value="DHH_sf"/>
</dbReference>
<dbReference type="InterPro" id="IPR004097">
    <property type="entry name" value="DHHA2"/>
</dbReference>
<dbReference type="InterPro" id="IPR038222">
    <property type="entry name" value="DHHA2_dom_sf"/>
</dbReference>
<dbReference type="InterPro" id="IPR022934">
    <property type="entry name" value="Mn-dep_inorganic_PyrPase"/>
</dbReference>
<dbReference type="NCBIfam" id="NF003877">
    <property type="entry name" value="PRK05427.1"/>
    <property type="match status" value="1"/>
</dbReference>
<dbReference type="PANTHER" id="PTHR12112">
    <property type="entry name" value="BNIP - RELATED"/>
    <property type="match status" value="1"/>
</dbReference>
<dbReference type="PANTHER" id="PTHR12112:SF22">
    <property type="entry name" value="MANGANESE-DEPENDENT INORGANIC PYROPHOSPHATASE-RELATED"/>
    <property type="match status" value="1"/>
</dbReference>
<dbReference type="Pfam" id="PF01368">
    <property type="entry name" value="DHH"/>
    <property type="match status" value="1"/>
</dbReference>
<dbReference type="Pfam" id="PF02833">
    <property type="entry name" value="DHHA2"/>
    <property type="match status" value="1"/>
</dbReference>
<dbReference type="SMART" id="SM01131">
    <property type="entry name" value="DHHA2"/>
    <property type="match status" value="1"/>
</dbReference>
<dbReference type="SUPFAM" id="SSF64182">
    <property type="entry name" value="DHH phosphoesterases"/>
    <property type="match status" value="1"/>
</dbReference>
<gene>
    <name evidence="1" type="primary">ppaC</name>
    <name type="ordered locus">BCB4264_A2837</name>
</gene>
<feature type="chain" id="PRO_1000192515" description="Probable manganese-dependent inorganic pyrophosphatase">
    <location>
        <begin position="1"/>
        <end position="309"/>
    </location>
</feature>
<feature type="binding site" evidence="1">
    <location>
        <position position="9"/>
    </location>
    <ligand>
        <name>Mn(2+)</name>
        <dbReference type="ChEBI" id="CHEBI:29035"/>
        <label>1</label>
    </ligand>
</feature>
<feature type="binding site" evidence="1">
    <location>
        <position position="13"/>
    </location>
    <ligand>
        <name>Mn(2+)</name>
        <dbReference type="ChEBI" id="CHEBI:29035"/>
        <label>1</label>
    </ligand>
</feature>
<feature type="binding site" evidence="1">
    <location>
        <position position="15"/>
    </location>
    <ligand>
        <name>Mn(2+)</name>
        <dbReference type="ChEBI" id="CHEBI:29035"/>
        <label>2</label>
    </ligand>
</feature>
<feature type="binding site" evidence="1">
    <location>
        <position position="75"/>
    </location>
    <ligand>
        <name>Mn(2+)</name>
        <dbReference type="ChEBI" id="CHEBI:29035"/>
        <label>1</label>
    </ligand>
</feature>
<feature type="binding site" evidence="1">
    <location>
        <position position="75"/>
    </location>
    <ligand>
        <name>Mn(2+)</name>
        <dbReference type="ChEBI" id="CHEBI:29035"/>
        <label>2</label>
    </ligand>
</feature>
<feature type="binding site" evidence="1">
    <location>
        <position position="97"/>
    </location>
    <ligand>
        <name>Mn(2+)</name>
        <dbReference type="ChEBI" id="CHEBI:29035"/>
        <label>2</label>
    </ligand>
</feature>
<feature type="binding site" evidence="1">
    <location>
        <position position="149"/>
    </location>
    <ligand>
        <name>Mn(2+)</name>
        <dbReference type="ChEBI" id="CHEBI:29035"/>
        <label>2</label>
    </ligand>
</feature>
<organism>
    <name type="scientific">Bacillus cereus (strain B4264)</name>
    <dbReference type="NCBI Taxonomy" id="405532"/>
    <lineage>
        <taxon>Bacteria</taxon>
        <taxon>Bacillati</taxon>
        <taxon>Bacillota</taxon>
        <taxon>Bacilli</taxon>
        <taxon>Bacillales</taxon>
        <taxon>Bacillaceae</taxon>
        <taxon>Bacillus</taxon>
        <taxon>Bacillus cereus group</taxon>
    </lineage>
</organism>
<proteinExistence type="inferred from homology"/>
<evidence type="ECO:0000255" key="1">
    <source>
        <dbReference type="HAMAP-Rule" id="MF_00207"/>
    </source>
</evidence>
<comment type="catalytic activity">
    <reaction evidence="1">
        <text>diphosphate + H2O = 2 phosphate + H(+)</text>
        <dbReference type="Rhea" id="RHEA:24576"/>
        <dbReference type="ChEBI" id="CHEBI:15377"/>
        <dbReference type="ChEBI" id="CHEBI:15378"/>
        <dbReference type="ChEBI" id="CHEBI:33019"/>
        <dbReference type="ChEBI" id="CHEBI:43474"/>
        <dbReference type="EC" id="3.6.1.1"/>
    </reaction>
</comment>
<comment type="cofactor">
    <cofactor evidence="1">
        <name>Mn(2+)</name>
        <dbReference type="ChEBI" id="CHEBI:29035"/>
    </cofactor>
    <text evidence="1">Binds 2 manganese ions per subunit.</text>
</comment>
<comment type="subcellular location">
    <subcellularLocation>
        <location evidence="1">Cytoplasm</location>
    </subcellularLocation>
</comment>
<comment type="similarity">
    <text evidence="1">Belongs to the PPase class C family.</text>
</comment>
<keyword id="KW-0963">Cytoplasm</keyword>
<keyword id="KW-0378">Hydrolase</keyword>
<keyword id="KW-0464">Manganese</keyword>
<keyword id="KW-0479">Metal-binding</keyword>
<reference key="1">
    <citation type="submission" date="2008-10" db="EMBL/GenBank/DDBJ databases">
        <title>Genome sequence of Bacillus cereus B4264.</title>
        <authorList>
            <person name="Dodson R.J."/>
            <person name="Durkin A.S."/>
            <person name="Rosovitz M.J."/>
            <person name="Rasko D.A."/>
            <person name="Hoffmaster A."/>
            <person name="Ravel J."/>
            <person name="Sutton G."/>
        </authorList>
    </citation>
    <scope>NUCLEOTIDE SEQUENCE [LARGE SCALE GENOMIC DNA]</scope>
    <source>
        <strain>B4264</strain>
    </source>
</reference>
<protein>
    <recommendedName>
        <fullName evidence="1">Probable manganese-dependent inorganic pyrophosphatase</fullName>
        <ecNumber evidence="1">3.6.1.1</ecNumber>
    </recommendedName>
    <alternativeName>
        <fullName evidence="1">Pyrophosphate phospho-hydrolase</fullName>
        <shortName evidence="1">PPase</shortName>
    </alternativeName>
</protein>
<sequence>MEKVLVFGHKNPDTDAICSAIAYAELKKELGMNAEPVRLGEISGETQFALDYFKVEGPRFVETVASEVDNVILVDHNERQQSANDIESVRVLEVIDHHRIANFETSDPIYYRCEPVGCTATILNKMYKENGVTIRKEVAGLMLSAIISDSLLFKSPTCTEQDVAAARELAQIAGVDADNYGLEMLKAGADLSGKTMEQLISLDAKEFQMGNAKVEIAQVNAVDTNDVLVHQAELEKVISAVVEEKGLDLFLFVVTDILTNDSVGLAIGKAANVVEKAYNVSLENNTATLKGVVSRKKQIVPVLTEAFQA</sequence>